<name>2SS_SOYBN</name>
<accession>P19594</accession>
<accession>Q53WV6</accession>
<organism>
    <name type="scientific">Glycine max</name>
    <name type="common">Soybean</name>
    <name type="synonym">Glycine hispida</name>
    <dbReference type="NCBI Taxonomy" id="3847"/>
    <lineage>
        <taxon>Eukaryota</taxon>
        <taxon>Viridiplantae</taxon>
        <taxon>Streptophyta</taxon>
        <taxon>Embryophyta</taxon>
        <taxon>Tracheophyta</taxon>
        <taxon>Spermatophyta</taxon>
        <taxon>Magnoliopsida</taxon>
        <taxon>eudicotyledons</taxon>
        <taxon>Gunneridae</taxon>
        <taxon>Pentapetalae</taxon>
        <taxon>rosids</taxon>
        <taxon>fabids</taxon>
        <taxon>Fabales</taxon>
        <taxon>Fabaceae</taxon>
        <taxon>Papilionoideae</taxon>
        <taxon>50 kb inversion clade</taxon>
        <taxon>NPAAA clade</taxon>
        <taxon>indigoferoid/millettioid clade</taxon>
        <taxon>Phaseoleae</taxon>
        <taxon>Glycine</taxon>
        <taxon>Glycine subgen. Soja</taxon>
    </lineage>
</organism>
<evidence type="ECO:0000255" key="1"/>
<evidence type="ECO:0000269" key="2">
    <source>
    </source>
</evidence>
<evidence type="ECO:0000269" key="3">
    <source>
    </source>
</evidence>
<evidence type="ECO:0000269" key="4">
    <source ref="2"/>
</evidence>
<evidence type="ECO:0000269" key="5">
    <source ref="4"/>
</evidence>
<evidence type="ECO:0000303" key="6">
    <source>
    </source>
</evidence>
<evidence type="ECO:0000303" key="7">
    <source ref="1"/>
</evidence>
<evidence type="ECO:0000303" key="8">
    <source ref="2"/>
</evidence>
<evidence type="ECO:0000305" key="9"/>
<evidence type="ECO:0000305" key="10">
    <source ref="1"/>
</evidence>
<keyword id="KW-0903">Direct protein sequencing</keyword>
<keyword id="KW-1015">Disulfide bond</keyword>
<keyword id="KW-1185">Reference proteome</keyword>
<keyword id="KW-0708">Seed storage protein</keyword>
<keyword id="KW-0732">Signal</keyword>
<keyword id="KW-0758">Storage protein</keyword>
<protein>
    <recommendedName>
        <fullName evidence="9">2S seed storage albumin protein</fullName>
    </recommendedName>
    <alternativeName>
        <fullName evidence="8">2S albumin</fullName>
    </alternativeName>
    <alternativeName>
        <fullName evidence="8">GM2S-1</fullName>
    </alternativeName>
    <alternativeName>
        <fullName evidence="7">Napin-type 2S albumin 3</fullName>
    </alternativeName>
    <component>
        <recommendedName>
            <fullName evidence="8">2S albumin small chain</fullName>
        </recommendedName>
        <alternativeName>
            <fullName>Aspartic acid-rich peptide</fullName>
        </alternativeName>
        <alternativeName>
            <fullName evidence="6">Lunasin</fullName>
        </alternativeName>
    </component>
    <component>
        <recommendedName>
            <fullName evidence="8">2S albumin large chain</fullName>
        </recommendedName>
        <alternativeName>
            <fullName>8 kDa methionine-rich protein</fullName>
            <shortName>8 kDa MRP</shortName>
        </alternativeName>
    </component>
</protein>
<dbReference type="EMBL" id="U71195">
    <property type="protein sequence ID" value="AAD00178.1"/>
    <property type="molecule type" value="mRNA"/>
</dbReference>
<dbReference type="EMBL" id="AF005030">
    <property type="protein sequence ID" value="AAB71140.1"/>
    <property type="molecule type" value="mRNA"/>
</dbReference>
<dbReference type="PIR" id="T05710">
    <property type="entry name" value="T05710"/>
</dbReference>
<dbReference type="RefSeq" id="NP_001238443.1">
    <property type="nucleotide sequence ID" value="NM_001251514.2"/>
</dbReference>
<dbReference type="SMR" id="P19594"/>
<dbReference type="STRING" id="3847.P19594"/>
<dbReference type="Allergome" id="11407">
    <property type="allergen name" value="Gly m 8.0101"/>
</dbReference>
<dbReference type="Allergome" id="1189">
    <property type="allergen name" value="Gly m 8"/>
</dbReference>
<dbReference type="PaxDb" id="3847-GLYMA13G36400.1"/>
<dbReference type="EnsemblPlants" id="KRH22246">
    <property type="protein sequence ID" value="KRH22246"/>
    <property type="gene ID" value="GLYMA_13G288100"/>
</dbReference>
<dbReference type="GeneID" id="548076"/>
<dbReference type="Gramene" id="KRH22246">
    <property type="protein sequence ID" value="KRH22246"/>
    <property type="gene ID" value="GLYMA_13G288100"/>
</dbReference>
<dbReference type="KEGG" id="gmx:548076"/>
<dbReference type="InParanoid" id="P19594"/>
<dbReference type="OMA" id="PCEKHIM"/>
<dbReference type="OrthoDB" id="1424936at2759"/>
<dbReference type="Proteomes" id="UP000008827">
    <property type="component" value="Chromosome 13"/>
</dbReference>
<dbReference type="GO" id="GO:0045735">
    <property type="term" value="F:nutrient reservoir activity"/>
    <property type="evidence" value="ECO:0007669"/>
    <property type="project" value="UniProtKB-KW"/>
</dbReference>
<dbReference type="DisProt" id="DP01154"/>
<dbReference type="Gene3D" id="1.10.110.10">
    <property type="entry name" value="Plant lipid-transfer and hydrophobic proteins"/>
    <property type="match status" value="1"/>
</dbReference>
<dbReference type="InterPro" id="IPR036312">
    <property type="entry name" value="Bifun_inhib/LTP/seed_sf"/>
</dbReference>
<dbReference type="InterPro" id="IPR016140">
    <property type="entry name" value="Bifunc_inhib/LTP/seed_store"/>
</dbReference>
<dbReference type="InterPro" id="IPR000617">
    <property type="entry name" value="Napin/2SS/CON"/>
</dbReference>
<dbReference type="PANTHER" id="PTHR35496">
    <property type="entry name" value="2S SEED STORAGE PROTEIN 1-RELATED"/>
    <property type="match status" value="1"/>
</dbReference>
<dbReference type="PANTHER" id="PTHR35496:SF20">
    <property type="entry name" value="2S SEED STORAGE PROTEIN 1-RELATED"/>
    <property type="match status" value="1"/>
</dbReference>
<dbReference type="SMART" id="SM00499">
    <property type="entry name" value="AAI"/>
    <property type="match status" value="1"/>
</dbReference>
<dbReference type="SUPFAM" id="SSF47699">
    <property type="entry name" value="Bifunctional inhibitor/lipid-transfer protein/seed storage 2S albumin"/>
    <property type="match status" value="1"/>
</dbReference>
<proteinExistence type="evidence at protein level"/>
<comment type="function">
    <text evidence="10">This is a 2S seed storage protein.</text>
</comment>
<comment type="function">
    <molecule>2S albumin small chain</molecule>
    <text evidence="2">Binds to mammalian chromatin, preventing the normal formation of the kinetochore complex in the centromere and leading to the disruption of mitosis (PubMed:10331812).</text>
</comment>
<comment type="subunit">
    <text>The protein consists of two chains linked by 2 disulfide bonds.</text>
</comment>
<comment type="tissue specificity">
    <text evidence="4 6">Expressed in cotyledons (Ref.2). Maximal expression in parenchyma cells undergoing DNA endoreduplication and cell expansion but not in actively dividing cells of the cotyledon (PubMed:10331812).</text>
</comment>
<comment type="developmental stage">
    <text evidence="4">Expressed from 3 weeks after flowering until the early desiccation stage, 7 weeks after flowering. Not detected in mature seeds. This temporal expression coincides with the initiation of mitotic arrest and DNA endoreduplication in developing soybean cotyledon.</text>
</comment>
<comment type="domain">
    <molecule>2S albumin small chain</molecule>
    <text evidence="2">The poly-Asp C-terminal domain (56-64) of the small chain is necessary for its histone binding and antimitotic effect.</text>
</comment>
<comment type="miscellaneous">
    <molecule>2S albumin small chain</molecule>
    <text evidence="2">The antimitotic effect leads to a cytotoxic response in mammalian cells.</text>
</comment>
<comment type="similarity">
    <text evidence="9">Belongs to the 2S seed storage albumins family.</text>
</comment>
<feature type="signal peptide" evidence="3">
    <location>
        <begin position="1"/>
        <end position="21"/>
    </location>
</feature>
<feature type="chain" id="PRO_0000032158" description="2S albumin small chain">
    <location>
        <begin position="22"/>
        <end position="64"/>
    </location>
</feature>
<feature type="propeptide" id="PRO_0000032159" evidence="5">
    <location>
        <begin position="65"/>
        <end position="81"/>
    </location>
</feature>
<feature type="chain" id="PRO_0000032160" description="2S albumin large chain">
    <location>
        <begin position="82"/>
        <end position="158"/>
    </location>
</feature>
<feature type="short sequence motif" description="Cell attachment site" evidence="1">
    <location>
        <begin position="54"/>
        <end position="56"/>
    </location>
</feature>
<sequence>MTKFTILLISLLFCIAHTCSASKWQHQQDSCRKQLQGVNLTPCEKHIMEKIQGRGDDDDDDDDDNHILRTMRGRINYIRRNEGKDEDEEEEGHMQKCCTEMSELRSPKCQCKALQKIMENQSEELEEKQKKKMEKELINLATMCRFGPMIQCDLSSDD</sequence>
<reference key="1">
    <citation type="submission" date="1996-09" db="EMBL/GenBank/DDBJ databases">
        <title>sulfur- and lysine-rich napin-type 2S albumins from soybean seed.</title>
        <authorList>
            <person name="Jung R."/>
            <person name="Hastings C."/>
            <person name="Coughlan S.J."/>
            <person name="Hu W.-N."/>
        </authorList>
    </citation>
    <scope>NUCLEOTIDE SEQUENCE [MRNA]</scope>
    <source>
        <strain>cv. Pioneer 9341</strain>
        <tissue>Seed</tissue>
    </source>
</reference>
<reference key="2">
    <citation type="online journal article" date="1997" name="Plant Gene Register">
        <title>A novel methionine-rich protein from soybean cotyledon: cloning and characterization of cDNA.</title>
        <authorList>
            <person name="Galvez A.F."/>
            <person name="Revilleza M.J.R."/>
            <person name="de Lumen B.O."/>
        </authorList>
        <locator>PGR97-103</locator>
    </citation>
    <scope>NUCLEOTIDE SEQUENCE [MRNA]</scope>
    <scope>TISSUE SPECIFICITY</scope>
    <scope>DEVELOPMENTAL STAGE</scope>
    <source>
        <strain>cv. Hodgson 78</strain>
        <tissue>Cotyledon</tissue>
    </source>
</reference>
<reference key="3">
    <citation type="journal article" date="1987" name="J. Biol. Chem.">
        <title>Amino acid sequence of a soybean (Glycine max) seed polypeptide having a poly(L-aspartic acid) structure.</title>
        <authorList>
            <person name="Odani S."/>
            <person name="Koide T."/>
            <person name="Ono T."/>
        </authorList>
    </citation>
    <scope>PROTEIN SEQUENCE OF 22-64</scope>
    <source>
        <tissue>Seed</tissue>
    </source>
</reference>
<reference key="4">
    <citation type="journal article" date="1996" name="J. Agric. Food Chem.">
        <title>An 8 kDa methionine-rich protein (MRP) from soybean (Glycine max) cotyledon: identification, purification and N-terminal sequence.</title>
        <authorList>
            <person name="Revilleza M.J."/>
            <person name="Galvez A.F."/>
            <person name="Krenz D.C."/>
            <person name="de Lumen B.O."/>
        </authorList>
        <dbReference type="AGRICOLA" id="IND20620639"/>
    </citation>
    <scope>PROTEIN SEQUENCE OF 82-96</scope>
</reference>
<reference key="5">
    <citation type="journal article" date="1999" name="Nat. Biotechnol.">
        <title>A soybean cDNA encoding a chromatin-binding peptide inhibits mitosis of mammalian cells.</title>
        <authorList>
            <person name="Galvez A.F."/>
            <person name="de Lumen B.O."/>
        </authorList>
    </citation>
    <scope>FUNCTION (2S ALBUMIN SMALL CHAIN)</scope>
    <scope>DOMAIN (2S ALBUMIN SMALL CHAIN)</scope>
</reference>